<name>ATPG_XANP2</name>
<proteinExistence type="inferred from homology"/>
<protein>
    <recommendedName>
        <fullName evidence="1">ATP synthase gamma chain</fullName>
    </recommendedName>
    <alternativeName>
        <fullName evidence="1">ATP synthase F1 sector gamma subunit</fullName>
    </alternativeName>
    <alternativeName>
        <fullName evidence="1">F-ATPase gamma subunit</fullName>
    </alternativeName>
</protein>
<feature type="chain" id="PRO_1000134223" description="ATP synthase gamma chain">
    <location>
        <begin position="1"/>
        <end position="291"/>
    </location>
</feature>
<reference key="1">
    <citation type="submission" date="2007-07" db="EMBL/GenBank/DDBJ databases">
        <title>Complete sequence of chromosome of Xanthobacter autotrophicus Py2.</title>
        <authorList>
            <consortium name="US DOE Joint Genome Institute"/>
            <person name="Copeland A."/>
            <person name="Lucas S."/>
            <person name="Lapidus A."/>
            <person name="Barry K."/>
            <person name="Glavina del Rio T."/>
            <person name="Hammon N."/>
            <person name="Israni S."/>
            <person name="Dalin E."/>
            <person name="Tice H."/>
            <person name="Pitluck S."/>
            <person name="Sims D."/>
            <person name="Brettin T."/>
            <person name="Bruce D."/>
            <person name="Detter J.C."/>
            <person name="Han C."/>
            <person name="Tapia R."/>
            <person name="Brainard J."/>
            <person name="Schmutz J."/>
            <person name="Larimer F."/>
            <person name="Land M."/>
            <person name="Hauser L."/>
            <person name="Kyrpides N."/>
            <person name="Kim E."/>
            <person name="Ensigns S.A."/>
            <person name="Richardson P."/>
        </authorList>
    </citation>
    <scope>NUCLEOTIDE SEQUENCE [LARGE SCALE GENOMIC DNA]</scope>
    <source>
        <strain>ATCC BAA-1158 / Py2</strain>
    </source>
</reference>
<dbReference type="EMBL" id="CP000781">
    <property type="protein sequence ID" value="ABS67323.1"/>
    <property type="molecule type" value="Genomic_DNA"/>
</dbReference>
<dbReference type="SMR" id="A7IH30"/>
<dbReference type="STRING" id="78245.Xaut_2079"/>
<dbReference type="KEGG" id="xau:Xaut_2079"/>
<dbReference type="eggNOG" id="COG0224">
    <property type="taxonomic scope" value="Bacteria"/>
</dbReference>
<dbReference type="HOGENOM" id="CLU_050669_0_1_5"/>
<dbReference type="OrthoDB" id="9812769at2"/>
<dbReference type="PhylomeDB" id="A7IH30"/>
<dbReference type="Proteomes" id="UP000002417">
    <property type="component" value="Chromosome"/>
</dbReference>
<dbReference type="GO" id="GO:0005886">
    <property type="term" value="C:plasma membrane"/>
    <property type="evidence" value="ECO:0007669"/>
    <property type="project" value="UniProtKB-SubCell"/>
</dbReference>
<dbReference type="GO" id="GO:0045259">
    <property type="term" value="C:proton-transporting ATP synthase complex"/>
    <property type="evidence" value="ECO:0007669"/>
    <property type="project" value="UniProtKB-KW"/>
</dbReference>
<dbReference type="GO" id="GO:0005524">
    <property type="term" value="F:ATP binding"/>
    <property type="evidence" value="ECO:0007669"/>
    <property type="project" value="UniProtKB-UniRule"/>
</dbReference>
<dbReference type="GO" id="GO:0046933">
    <property type="term" value="F:proton-transporting ATP synthase activity, rotational mechanism"/>
    <property type="evidence" value="ECO:0007669"/>
    <property type="project" value="UniProtKB-UniRule"/>
</dbReference>
<dbReference type="GO" id="GO:0042777">
    <property type="term" value="P:proton motive force-driven plasma membrane ATP synthesis"/>
    <property type="evidence" value="ECO:0007669"/>
    <property type="project" value="UniProtKB-UniRule"/>
</dbReference>
<dbReference type="CDD" id="cd12151">
    <property type="entry name" value="F1-ATPase_gamma"/>
    <property type="match status" value="1"/>
</dbReference>
<dbReference type="FunFam" id="1.10.287.80:FF:000001">
    <property type="entry name" value="ATP synthase gamma chain"/>
    <property type="match status" value="1"/>
</dbReference>
<dbReference type="FunFam" id="1.10.287.80:FF:000003">
    <property type="entry name" value="ATP synthase gamma chain, chloroplastic"/>
    <property type="match status" value="1"/>
</dbReference>
<dbReference type="Gene3D" id="3.40.1380.10">
    <property type="match status" value="1"/>
</dbReference>
<dbReference type="Gene3D" id="1.10.287.80">
    <property type="entry name" value="ATP synthase, gamma subunit, helix hairpin domain"/>
    <property type="match status" value="1"/>
</dbReference>
<dbReference type="HAMAP" id="MF_00815">
    <property type="entry name" value="ATP_synth_gamma_bact"/>
    <property type="match status" value="1"/>
</dbReference>
<dbReference type="InterPro" id="IPR035968">
    <property type="entry name" value="ATP_synth_F1_ATPase_gsu"/>
</dbReference>
<dbReference type="InterPro" id="IPR000131">
    <property type="entry name" value="ATP_synth_F1_gsu"/>
</dbReference>
<dbReference type="InterPro" id="IPR023632">
    <property type="entry name" value="ATP_synth_F1_gsu_CS"/>
</dbReference>
<dbReference type="NCBIfam" id="TIGR01146">
    <property type="entry name" value="ATPsyn_F1gamma"/>
    <property type="match status" value="1"/>
</dbReference>
<dbReference type="NCBIfam" id="NF004146">
    <property type="entry name" value="PRK05621.1-4"/>
    <property type="match status" value="1"/>
</dbReference>
<dbReference type="PANTHER" id="PTHR11693">
    <property type="entry name" value="ATP SYNTHASE GAMMA CHAIN"/>
    <property type="match status" value="1"/>
</dbReference>
<dbReference type="PANTHER" id="PTHR11693:SF22">
    <property type="entry name" value="ATP SYNTHASE SUBUNIT GAMMA, MITOCHONDRIAL"/>
    <property type="match status" value="1"/>
</dbReference>
<dbReference type="Pfam" id="PF00231">
    <property type="entry name" value="ATP-synt"/>
    <property type="match status" value="1"/>
</dbReference>
<dbReference type="PIRSF" id="PIRSF039089">
    <property type="entry name" value="ATP_synthase_gamma"/>
    <property type="match status" value="1"/>
</dbReference>
<dbReference type="PRINTS" id="PR00126">
    <property type="entry name" value="ATPASEGAMMA"/>
</dbReference>
<dbReference type="SUPFAM" id="SSF52943">
    <property type="entry name" value="ATP synthase (F1-ATPase), gamma subunit"/>
    <property type="match status" value="1"/>
</dbReference>
<dbReference type="PROSITE" id="PS00153">
    <property type="entry name" value="ATPASE_GAMMA"/>
    <property type="match status" value="1"/>
</dbReference>
<gene>
    <name evidence="1" type="primary">atpG</name>
    <name type="ordered locus">Xaut_2079</name>
</gene>
<sequence>MASLKDLRNRIASVKATQKITKAMQMVAAAKLRRAQMAAEAARPYAERMDTVLGNLAAGIVGAGQAPVLIAGTGQSQKHLLLVCTGERGLCGAFNTSIVRLAREKAQQLIGEGKDVTFFCVGRKGYDQLRRTYPDRIIELVDLRSVRTLSFKNASDIASKILTLLDQGAFDVCTLFYSNFKSVISQIPTAQQIIPAVFEAQDEGEGGPVYEYEPAEEDILADLLPRNIAVQIFRALLENQASFYGSQMSAMDNATRNAGDMIKKQTLIYNRTRQAMITKELIEIISGAEAL</sequence>
<organism>
    <name type="scientific">Xanthobacter autotrophicus (strain ATCC BAA-1158 / Py2)</name>
    <dbReference type="NCBI Taxonomy" id="78245"/>
    <lineage>
        <taxon>Bacteria</taxon>
        <taxon>Pseudomonadati</taxon>
        <taxon>Pseudomonadota</taxon>
        <taxon>Alphaproteobacteria</taxon>
        <taxon>Hyphomicrobiales</taxon>
        <taxon>Xanthobacteraceae</taxon>
        <taxon>Xanthobacter</taxon>
    </lineage>
</organism>
<evidence type="ECO:0000255" key="1">
    <source>
        <dbReference type="HAMAP-Rule" id="MF_00815"/>
    </source>
</evidence>
<comment type="function">
    <text evidence="1">Produces ATP from ADP in the presence of a proton gradient across the membrane. The gamma chain is believed to be important in regulating ATPase activity and the flow of protons through the CF(0) complex.</text>
</comment>
<comment type="subunit">
    <text evidence="1">F-type ATPases have 2 components, CF(1) - the catalytic core - and CF(0) - the membrane proton channel. CF(1) has five subunits: alpha(3), beta(3), gamma(1), delta(1), epsilon(1). CF(0) has three main subunits: a, b and c.</text>
</comment>
<comment type="subcellular location">
    <subcellularLocation>
        <location evidence="1">Cell inner membrane</location>
        <topology evidence="1">Peripheral membrane protein</topology>
    </subcellularLocation>
</comment>
<comment type="similarity">
    <text evidence="1">Belongs to the ATPase gamma chain family.</text>
</comment>
<accession>A7IH30</accession>
<keyword id="KW-0066">ATP synthesis</keyword>
<keyword id="KW-0997">Cell inner membrane</keyword>
<keyword id="KW-1003">Cell membrane</keyword>
<keyword id="KW-0139">CF(1)</keyword>
<keyword id="KW-0375">Hydrogen ion transport</keyword>
<keyword id="KW-0406">Ion transport</keyword>
<keyword id="KW-0472">Membrane</keyword>
<keyword id="KW-1185">Reference proteome</keyword>
<keyword id="KW-0813">Transport</keyword>